<proteinExistence type="inferred from homology"/>
<name>YAHN_ECOLI</name>
<dbReference type="EMBL" id="U73857">
    <property type="protein sequence ID" value="AAB18053.1"/>
    <property type="molecule type" value="Genomic_DNA"/>
</dbReference>
<dbReference type="EMBL" id="U00096">
    <property type="protein sequence ID" value="AAC73431.1"/>
    <property type="molecule type" value="Genomic_DNA"/>
</dbReference>
<dbReference type="EMBL" id="AP009048">
    <property type="protein sequence ID" value="BAE76111.1"/>
    <property type="molecule type" value="Genomic_DNA"/>
</dbReference>
<dbReference type="PIR" id="H64759">
    <property type="entry name" value="H64759"/>
</dbReference>
<dbReference type="RefSeq" id="NP_414862.1">
    <property type="nucleotide sequence ID" value="NC_000913.3"/>
</dbReference>
<dbReference type="RefSeq" id="WP_000983410.1">
    <property type="nucleotide sequence ID" value="NZ_SSZK01000063.1"/>
</dbReference>
<dbReference type="BioGRID" id="4259805">
    <property type="interactions" value="11"/>
</dbReference>
<dbReference type="BioGRID" id="849365">
    <property type="interactions" value="1"/>
</dbReference>
<dbReference type="FunCoup" id="P75693">
    <property type="interactions" value="78"/>
</dbReference>
<dbReference type="IntAct" id="P75693">
    <property type="interactions" value="3"/>
</dbReference>
<dbReference type="STRING" id="511145.b0328"/>
<dbReference type="TCDB" id="2.A.76.1.3">
    <property type="family name" value="the resistance to homoserine/threonine (rhtb) family"/>
</dbReference>
<dbReference type="PaxDb" id="511145-b0328"/>
<dbReference type="EnsemblBacteria" id="AAC73431">
    <property type="protein sequence ID" value="AAC73431"/>
    <property type="gene ID" value="b0328"/>
</dbReference>
<dbReference type="GeneID" id="944968"/>
<dbReference type="KEGG" id="ecj:JW0320"/>
<dbReference type="KEGG" id="eco:b0328"/>
<dbReference type="PATRIC" id="fig|511145.12.peg.334"/>
<dbReference type="EchoBASE" id="EB3367"/>
<dbReference type="eggNOG" id="COG1280">
    <property type="taxonomic scope" value="Bacteria"/>
</dbReference>
<dbReference type="HOGENOM" id="CLU_079569_0_2_6"/>
<dbReference type="InParanoid" id="P75693"/>
<dbReference type="OMA" id="SVIWRVF"/>
<dbReference type="OrthoDB" id="9804822at2"/>
<dbReference type="PhylomeDB" id="P75693"/>
<dbReference type="BioCyc" id="EcoCyc:G6193-MONOMER"/>
<dbReference type="PRO" id="PR:P75693"/>
<dbReference type="Proteomes" id="UP000000625">
    <property type="component" value="Chromosome"/>
</dbReference>
<dbReference type="GO" id="GO:0005886">
    <property type="term" value="C:plasma membrane"/>
    <property type="evidence" value="ECO:0000314"/>
    <property type="project" value="EcoCyc"/>
</dbReference>
<dbReference type="GO" id="GO:0015171">
    <property type="term" value="F:amino acid transmembrane transporter activity"/>
    <property type="evidence" value="ECO:0000318"/>
    <property type="project" value="GO_Central"/>
</dbReference>
<dbReference type="GO" id="GO:0006865">
    <property type="term" value="P:amino acid transport"/>
    <property type="evidence" value="ECO:0000318"/>
    <property type="project" value="GO_Central"/>
</dbReference>
<dbReference type="InterPro" id="IPR004778">
    <property type="entry name" value="Homoserine/Threonine_efflux"/>
</dbReference>
<dbReference type="InterPro" id="IPR001123">
    <property type="entry name" value="LeuE-type"/>
</dbReference>
<dbReference type="NCBIfam" id="TIGR00949">
    <property type="entry name" value="2A76"/>
    <property type="match status" value="1"/>
</dbReference>
<dbReference type="PANTHER" id="PTHR30086">
    <property type="entry name" value="ARGININE EXPORTER PROTEIN ARGO"/>
    <property type="match status" value="1"/>
</dbReference>
<dbReference type="PANTHER" id="PTHR30086:SF21">
    <property type="entry name" value="TRANSPORT PROTEIN"/>
    <property type="match status" value="1"/>
</dbReference>
<dbReference type="Pfam" id="PF01810">
    <property type="entry name" value="LysE"/>
    <property type="match status" value="1"/>
</dbReference>
<dbReference type="PIRSF" id="PIRSF006324">
    <property type="entry name" value="LeuE"/>
    <property type="match status" value="1"/>
</dbReference>
<sequence>MMQLVHLFMDEITMDPLHAVYLTVGLFVITFFNPGANLFVVVQTSLASGRRAGVLTGLGVALGDAFYSGLGLFGLATLITQCEEIFSLIRIVGGAYLLWFAWCSMRRQSTPQMSTLQQPISAPWYVFFRRGLITDLSNPQTVLFFISIFSVTLNAETPTWARLMAWAGIVLASIIWRVFLSQAFSLPAVRRAYGRMQRVASRVIGAIIGVFALRLIYEGVTQR</sequence>
<keyword id="KW-1003">Cell membrane</keyword>
<keyword id="KW-0472">Membrane</keyword>
<keyword id="KW-1185">Reference proteome</keyword>
<keyword id="KW-0812">Transmembrane</keyword>
<keyword id="KW-1133">Transmembrane helix</keyword>
<accession>P75693</accession>
<accession>P71307</accession>
<accession>Q2MC95</accession>
<protein>
    <recommendedName>
        <fullName>Uncharacterized membrane protein YahN</fullName>
    </recommendedName>
</protein>
<gene>
    <name type="primary">yahN</name>
    <name type="ordered locus">b0328</name>
    <name type="ordered locus">JW0320</name>
</gene>
<organism>
    <name type="scientific">Escherichia coli (strain K12)</name>
    <dbReference type="NCBI Taxonomy" id="83333"/>
    <lineage>
        <taxon>Bacteria</taxon>
        <taxon>Pseudomonadati</taxon>
        <taxon>Pseudomonadota</taxon>
        <taxon>Gammaproteobacteria</taxon>
        <taxon>Enterobacterales</taxon>
        <taxon>Enterobacteriaceae</taxon>
        <taxon>Escherichia</taxon>
    </lineage>
</organism>
<feature type="chain" id="PRO_0000094741" description="Uncharacterized membrane protein YahN">
    <location>
        <begin position="1"/>
        <end position="223"/>
    </location>
</feature>
<feature type="transmembrane region" description="Helical" evidence="1">
    <location>
        <begin position="22"/>
        <end position="42"/>
    </location>
</feature>
<feature type="transmembrane region" description="Helical" evidence="1">
    <location>
        <begin position="59"/>
        <end position="79"/>
    </location>
</feature>
<feature type="transmembrane region" description="Helical" evidence="1">
    <location>
        <begin position="85"/>
        <end position="105"/>
    </location>
</feature>
<feature type="transmembrane region" description="Helical" evidence="1">
    <location>
        <begin position="164"/>
        <end position="184"/>
    </location>
</feature>
<feature type="sequence conflict" description="In Ref. 1; AAB18053." evidence="2" ref="1">
    <original>LRLIYEGVTQR</original>
    <variation>YA</variation>
    <location>
        <begin position="213"/>
        <end position="223"/>
    </location>
</feature>
<comment type="subcellular location">
    <subcellularLocation>
        <location evidence="2">Cell membrane</location>
        <topology evidence="2">Multi-pass membrane protein</topology>
    </subcellularLocation>
</comment>
<comment type="similarity">
    <text evidence="2">Belongs to the Rht family.</text>
</comment>
<reference key="1">
    <citation type="submission" date="1997-01" db="EMBL/GenBank/DDBJ databases">
        <title>Sequence of minutes 4-25 of Escherichia coli.</title>
        <authorList>
            <person name="Chung E."/>
            <person name="Allen E."/>
            <person name="Araujo R."/>
            <person name="Aparicio A.M."/>
            <person name="Davis K."/>
            <person name="Duncan M."/>
            <person name="Federspiel N."/>
            <person name="Hyman R."/>
            <person name="Kalman S."/>
            <person name="Komp C."/>
            <person name="Kurdi O."/>
            <person name="Lew H."/>
            <person name="Lin D."/>
            <person name="Namath A."/>
            <person name="Oefner P."/>
            <person name="Roberts D."/>
            <person name="Schramm S."/>
            <person name="Davis R.W."/>
        </authorList>
    </citation>
    <scope>NUCLEOTIDE SEQUENCE [LARGE SCALE GENOMIC DNA]</scope>
    <source>
        <strain>K12 / MG1655 / ATCC 47076</strain>
    </source>
</reference>
<reference key="2">
    <citation type="journal article" date="1997" name="Science">
        <title>The complete genome sequence of Escherichia coli K-12.</title>
        <authorList>
            <person name="Blattner F.R."/>
            <person name="Plunkett G. III"/>
            <person name="Bloch C.A."/>
            <person name="Perna N.T."/>
            <person name="Burland V."/>
            <person name="Riley M."/>
            <person name="Collado-Vides J."/>
            <person name="Glasner J.D."/>
            <person name="Rode C.K."/>
            <person name="Mayhew G.F."/>
            <person name="Gregor J."/>
            <person name="Davis N.W."/>
            <person name="Kirkpatrick H.A."/>
            <person name="Goeden M.A."/>
            <person name="Rose D.J."/>
            <person name="Mau B."/>
            <person name="Shao Y."/>
        </authorList>
    </citation>
    <scope>NUCLEOTIDE SEQUENCE [LARGE SCALE GENOMIC DNA]</scope>
    <source>
        <strain>K12 / MG1655 / ATCC 47076</strain>
    </source>
</reference>
<reference key="3">
    <citation type="journal article" date="2006" name="Mol. Syst. Biol.">
        <title>Highly accurate genome sequences of Escherichia coli K-12 strains MG1655 and W3110.</title>
        <authorList>
            <person name="Hayashi K."/>
            <person name="Morooka N."/>
            <person name="Yamamoto Y."/>
            <person name="Fujita K."/>
            <person name="Isono K."/>
            <person name="Choi S."/>
            <person name="Ohtsubo E."/>
            <person name="Baba T."/>
            <person name="Wanner B.L."/>
            <person name="Mori H."/>
            <person name="Horiuchi T."/>
        </authorList>
    </citation>
    <scope>NUCLEOTIDE SEQUENCE [LARGE SCALE GENOMIC DNA]</scope>
    <source>
        <strain>K12 / W3110 / ATCC 27325 / DSM 5911</strain>
    </source>
</reference>
<evidence type="ECO:0000255" key="1"/>
<evidence type="ECO:0000305" key="2"/>